<proteinExistence type="inferred from homology"/>
<protein>
    <recommendedName>
        <fullName evidence="1">tRNA (guanine-N(7)-)-methyltransferase</fullName>
        <ecNumber evidence="1">2.1.1.33</ecNumber>
    </recommendedName>
    <alternativeName>
        <fullName evidence="1">tRNA (guanine(46)-N(7))-methyltransferase</fullName>
    </alternativeName>
    <alternativeName>
        <fullName evidence="1">tRNA(m7G46)-methyltransferase</fullName>
    </alternativeName>
</protein>
<keyword id="KW-0489">Methyltransferase</keyword>
<keyword id="KW-1185">Reference proteome</keyword>
<keyword id="KW-0949">S-adenosyl-L-methionine</keyword>
<keyword id="KW-0808">Transferase</keyword>
<keyword id="KW-0819">tRNA processing</keyword>
<accession>O25443</accession>
<gene>
    <name evidence="1" type="primary">trmB</name>
    <name type="ordered locus">HP_0747</name>
</gene>
<evidence type="ECO:0000255" key="1">
    <source>
        <dbReference type="HAMAP-Rule" id="MF_01057"/>
    </source>
</evidence>
<name>TRMB_HELPY</name>
<sequence>MPHFLAKLDFKPLEYPLIEGDFCFHREFLSLKNPTKSCVYASFKDRIFLLQKIRRANDFLIKSEKATPLKREVLKQALRIYSQSFEVISHNLQENSKHASGKKTLDLGTFEDFIQKNQAPILIEIGFGSGRHLIELAKNNPTKTCLGIEIHTPSIAQALKQIELLDLKNLHILQGDGRLVLESMPNHRCEKIFVHFPVPWNEKKHRRVLSEKFLNEALRVLKPRGFLELRTDDSLYFEDSLKLALKNFQCEIEIKKNAQIPVVSKYEARWNKLKKDIYDLRIYSLEWNETPFDNHAFDFSFDTITISKKSVGTILKTKKIIQEGYFVHVCNIYENKGDFLVELSMGDFDWPVRLFVLLTENQIFYLNKSPLKTLNNHKAHLLLQNILSQKGIG</sequence>
<reference key="1">
    <citation type="journal article" date="1997" name="Nature">
        <title>The complete genome sequence of the gastric pathogen Helicobacter pylori.</title>
        <authorList>
            <person name="Tomb J.-F."/>
            <person name="White O."/>
            <person name="Kerlavage A.R."/>
            <person name="Clayton R.A."/>
            <person name="Sutton G.G."/>
            <person name="Fleischmann R.D."/>
            <person name="Ketchum K.A."/>
            <person name="Klenk H.-P."/>
            <person name="Gill S.R."/>
            <person name="Dougherty B.A."/>
            <person name="Nelson K.E."/>
            <person name="Quackenbush J."/>
            <person name="Zhou L."/>
            <person name="Kirkness E.F."/>
            <person name="Peterson S.N."/>
            <person name="Loftus B.J."/>
            <person name="Richardson D.L."/>
            <person name="Dodson R.J."/>
            <person name="Khalak H.G."/>
            <person name="Glodek A."/>
            <person name="McKenney K."/>
            <person name="FitzGerald L.M."/>
            <person name="Lee N."/>
            <person name="Adams M.D."/>
            <person name="Hickey E.K."/>
            <person name="Berg D.E."/>
            <person name="Gocayne J.D."/>
            <person name="Utterback T.R."/>
            <person name="Peterson J.D."/>
            <person name="Kelley J.M."/>
            <person name="Cotton M.D."/>
            <person name="Weidman J.F."/>
            <person name="Fujii C."/>
            <person name="Bowman C."/>
            <person name="Watthey L."/>
            <person name="Wallin E."/>
            <person name="Hayes W.S."/>
            <person name="Borodovsky M."/>
            <person name="Karp P.D."/>
            <person name="Smith H.O."/>
            <person name="Fraser C.M."/>
            <person name="Venter J.C."/>
        </authorList>
    </citation>
    <scope>NUCLEOTIDE SEQUENCE [LARGE SCALE GENOMIC DNA]</scope>
    <source>
        <strain>ATCC 700392 / 26695</strain>
    </source>
</reference>
<organism>
    <name type="scientific">Helicobacter pylori (strain ATCC 700392 / 26695)</name>
    <name type="common">Campylobacter pylori</name>
    <dbReference type="NCBI Taxonomy" id="85962"/>
    <lineage>
        <taxon>Bacteria</taxon>
        <taxon>Pseudomonadati</taxon>
        <taxon>Campylobacterota</taxon>
        <taxon>Epsilonproteobacteria</taxon>
        <taxon>Campylobacterales</taxon>
        <taxon>Helicobacteraceae</taxon>
        <taxon>Helicobacter</taxon>
    </lineage>
</organism>
<comment type="function">
    <text evidence="1">Catalyzes the formation of N(7)-methylguanine at position 46 (m7G46) in tRNA.</text>
</comment>
<comment type="catalytic activity">
    <reaction evidence="1">
        <text>guanosine(46) in tRNA + S-adenosyl-L-methionine = N(7)-methylguanosine(46) in tRNA + S-adenosyl-L-homocysteine</text>
        <dbReference type="Rhea" id="RHEA:42708"/>
        <dbReference type="Rhea" id="RHEA-COMP:10188"/>
        <dbReference type="Rhea" id="RHEA-COMP:10189"/>
        <dbReference type="ChEBI" id="CHEBI:57856"/>
        <dbReference type="ChEBI" id="CHEBI:59789"/>
        <dbReference type="ChEBI" id="CHEBI:74269"/>
        <dbReference type="ChEBI" id="CHEBI:74480"/>
        <dbReference type="EC" id="2.1.1.33"/>
    </reaction>
</comment>
<comment type="pathway">
    <text evidence="1">tRNA modification; N(7)-methylguanine-tRNA biosynthesis.</text>
</comment>
<comment type="similarity">
    <text evidence="1">Belongs to the class I-like SAM-binding methyltransferase superfamily. TrmB family.</text>
</comment>
<feature type="chain" id="PRO_0000171335" description="tRNA (guanine-N(7)-)-methyltransferase">
    <location>
        <begin position="1"/>
        <end position="393"/>
    </location>
</feature>
<feature type="binding site" evidence="1">
    <location>
        <position position="124"/>
    </location>
    <ligand>
        <name>S-adenosyl-L-methionine</name>
        <dbReference type="ChEBI" id="CHEBI:59789"/>
    </ligand>
</feature>
<feature type="binding site" evidence="1">
    <location>
        <position position="149"/>
    </location>
    <ligand>
        <name>S-adenosyl-L-methionine</name>
        <dbReference type="ChEBI" id="CHEBI:59789"/>
    </ligand>
</feature>
<feature type="binding site" evidence="1">
    <location>
        <position position="176"/>
    </location>
    <ligand>
        <name>S-adenosyl-L-methionine</name>
        <dbReference type="ChEBI" id="CHEBI:59789"/>
    </ligand>
</feature>
<feature type="binding site" evidence="1">
    <location>
        <position position="232"/>
    </location>
    <ligand>
        <name>substrate</name>
    </ligand>
</feature>
<dbReference type="EC" id="2.1.1.33" evidence="1"/>
<dbReference type="EMBL" id="AE000511">
    <property type="protein sequence ID" value="AAD07796.1"/>
    <property type="molecule type" value="Genomic_DNA"/>
</dbReference>
<dbReference type="PIR" id="C64613">
    <property type="entry name" value="C64613"/>
</dbReference>
<dbReference type="RefSeq" id="NP_207540.1">
    <property type="nucleotide sequence ID" value="NC_000915.1"/>
</dbReference>
<dbReference type="RefSeq" id="WP_001119909.1">
    <property type="nucleotide sequence ID" value="NC_018939.1"/>
</dbReference>
<dbReference type="SMR" id="O25443"/>
<dbReference type="DIP" id="DIP-3501N"/>
<dbReference type="IntAct" id="O25443">
    <property type="interactions" value="1"/>
</dbReference>
<dbReference type="MINT" id="O25443"/>
<dbReference type="STRING" id="85962.HP_0747"/>
<dbReference type="PaxDb" id="85962-C694_03845"/>
<dbReference type="EnsemblBacteria" id="AAD07796">
    <property type="protein sequence ID" value="AAD07796"/>
    <property type="gene ID" value="HP_0747"/>
</dbReference>
<dbReference type="KEGG" id="heo:C694_03845"/>
<dbReference type="KEGG" id="hpy:HP_0747"/>
<dbReference type="PATRIC" id="fig|85962.47.peg.797"/>
<dbReference type="eggNOG" id="COG0220">
    <property type="taxonomic scope" value="Bacteria"/>
</dbReference>
<dbReference type="InParanoid" id="O25443"/>
<dbReference type="OrthoDB" id="9802090at2"/>
<dbReference type="UniPathway" id="UPA00989"/>
<dbReference type="Proteomes" id="UP000000429">
    <property type="component" value="Chromosome"/>
</dbReference>
<dbReference type="GO" id="GO:0043527">
    <property type="term" value="C:tRNA methyltransferase complex"/>
    <property type="evidence" value="ECO:0000318"/>
    <property type="project" value="GO_Central"/>
</dbReference>
<dbReference type="GO" id="GO:0008176">
    <property type="term" value="F:tRNA (guanine(46)-N7)-methyltransferase activity"/>
    <property type="evidence" value="ECO:0000318"/>
    <property type="project" value="GO_Central"/>
</dbReference>
<dbReference type="GO" id="GO:0036265">
    <property type="term" value="P:RNA (guanine-N7)-methylation"/>
    <property type="evidence" value="ECO:0000318"/>
    <property type="project" value="GO_Central"/>
</dbReference>
<dbReference type="GO" id="GO:0030488">
    <property type="term" value="P:tRNA methylation"/>
    <property type="evidence" value="ECO:0000318"/>
    <property type="project" value="GO_Central"/>
</dbReference>
<dbReference type="CDD" id="cd02440">
    <property type="entry name" value="AdoMet_MTases"/>
    <property type="match status" value="1"/>
</dbReference>
<dbReference type="FunFam" id="3.40.50.150:FF:000506">
    <property type="entry name" value="tRNA (guanine-N(7)-)-methyltransferase"/>
    <property type="match status" value="1"/>
</dbReference>
<dbReference type="Gene3D" id="3.40.50.150">
    <property type="entry name" value="Vaccinia Virus protein VP39"/>
    <property type="match status" value="1"/>
</dbReference>
<dbReference type="HAMAP" id="MF_01057">
    <property type="entry name" value="tRNA_methyltr_TrmB"/>
    <property type="match status" value="1"/>
</dbReference>
<dbReference type="InterPro" id="IPR029063">
    <property type="entry name" value="SAM-dependent_MTases_sf"/>
</dbReference>
<dbReference type="InterPro" id="IPR003358">
    <property type="entry name" value="tRNA_(Gua-N-7)_MeTrfase_Trmb"/>
</dbReference>
<dbReference type="InterPro" id="IPR055361">
    <property type="entry name" value="tRNA_methyltr_TrmB_bact"/>
</dbReference>
<dbReference type="NCBIfam" id="NF010719">
    <property type="entry name" value="PRK14121.1"/>
    <property type="match status" value="1"/>
</dbReference>
<dbReference type="NCBIfam" id="TIGR00091">
    <property type="entry name" value="tRNA (guanosine(46)-N7)-methyltransferase TrmB"/>
    <property type="match status" value="1"/>
</dbReference>
<dbReference type="PANTHER" id="PTHR23417">
    <property type="entry name" value="3-DEOXY-D-MANNO-OCTULOSONIC-ACID TRANSFERASE/TRNA GUANINE-N 7 - -METHYLTRANSFERASE"/>
    <property type="match status" value="1"/>
</dbReference>
<dbReference type="PANTHER" id="PTHR23417:SF14">
    <property type="entry name" value="PENTACOTRIPEPTIDE-REPEAT REGION OF PRORP DOMAIN-CONTAINING PROTEIN"/>
    <property type="match status" value="1"/>
</dbReference>
<dbReference type="Pfam" id="PF02390">
    <property type="entry name" value="Methyltransf_4"/>
    <property type="match status" value="1"/>
</dbReference>
<dbReference type="SUPFAM" id="SSF53335">
    <property type="entry name" value="S-adenosyl-L-methionine-dependent methyltransferases"/>
    <property type="match status" value="1"/>
</dbReference>
<dbReference type="PROSITE" id="PS51625">
    <property type="entry name" value="SAM_MT_TRMB"/>
    <property type="match status" value="1"/>
</dbReference>